<evidence type="ECO:0000256" key="1">
    <source>
        <dbReference type="SAM" id="MobiDB-lite"/>
    </source>
</evidence>
<evidence type="ECO:0000305" key="2"/>
<accession>P09701</accession>
<accession>Q7M6H7</accession>
<gene>
    <name type="primary">US23</name>
</gene>
<protein>
    <recommendedName>
        <fullName>Tegument protein US23</fullName>
    </recommendedName>
    <alternativeName>
        <fullName>Protein HHLF7</fullName>
    </alternativeName>
</protein>
<sequence length="592" mass="68884">MWRTRWEDGAPTFTRNDEFLYCHTRYETFLRVMGDFQGIFECQYSADVLRDWVRNHVDQVLSLGIPHNWFLQVRPGSTMPELRDQLLDDVICCPERLIVLGKCVIMVEDHYEETELVLCMGGGTRLYIYEPSQEILLLCARHLDELARYGMMYTEAVYRQPQTPFATRVPHDVVAMLLRHGHDADALAACVGEHHGRDVNFHTPGRHAKTLKLLTSFGCLTDCWPFEVAPAARLAECEMYVTLQLRCRWYLLGAVGSYRAGGFFDTSFLIIFDRFCRFYVVIVKSHLDRSPPLQRLAGEIYRLADSLEELFRAGLMKVYVRRRYEHGLRRAARLERNGGCVHMGEAARLHFTMFDSGVDRDYARQFRWLCRGDRFRAEMLNNWDGWDAFTIWQARVVRGDFAERRRPRSLGDGEEEDEGNDGRAMPVVRRRPPPMPRDDDEDNHVVPDNQNLEVIHDALADDEEQGEDDDDSGAEPMEPEENNVVPNVERRGGEDAVAARMAAGHESDDDEWEDLGFDLEEDTVFDLKDVDEWFEQRRLAEKERWHLGQRIVNAYRTEAEVSEAEVEARRINLNTDLSPEWVKSFDFREHFV</sequence>
<reference key="1">
    <citation type="journal article" date="1986" name="J. Mol. Biol.">
        <title>Sequence of the short unique region, short repeats, and part of the long repeats of human cytomegalovirus.</title>
        <authorList>
            <person name="Weston K.M."/>
            <person name="Barrell B.G."/>
        </authorList>
    </citation>
    <scope>NUCLEOTIDE SEQUENCE [GENOMIC DNA]</scope>
</reference>
<reference key="2">
    <citation type="journal article" date="1990" name="Curr. Top. Microbiol. Immunol.">
        <title>Analysis of the protein-coding content of the sequence of human cytomegalovirus strain AD169.</title>
        <authorList>
            <person name="Chee M.S."/>
            <person name="Bankier A.T."/>
            <person name="Beck S."/>
            <person name="Bohni R."/>
            <person name="Brown C.M."/>
            <person name="Cerny R."/>
            <person name="Horsnell T."/>
            <person name="Hutchison C.A. III"/>
            <person name="Kouzarides T."/>
            <person name="Martignetti J.A."/>
            <person name="Preddie E."/>
            <person name="Satchwell S.C."/>
            <person name="Tomlinson P."/>
            <person name="Weston K.M."/>
            <person name="Barrell B.G."/>
        </authorList>
    </citation>
    <scope>NUCLEOTIDE SEQUENCE [LARGE SCALE GENOMIC DNA]</scope>
</reference>
<reference key="3">
    <citation type="journal article" date="2003" name="J. Gen. Virol.">
        <title>The human cytomegalovirus genome revisited: comparison with the chimpanzee cytomegalovirus genome.</title>
        <authorList>
            <person name="Davison A.J."/>
            <person name="Dolan A."/>
            <person name="Akter P."/>
            <person name="Addison C."/>
            <person name="Dargan D.J."/>
            <person name="Alcendor D.J."/>
            <person name="McGeoch D.J."/>
            <person name="Hayward G.S."/>
        </authorList>
    </citation>
    <scope>GENOME REANNOTATION</scope>
</reference>
<reference key="4">
    <citation type="journal article" date="2003" name="J. Gen. Virol.">
        <authorList>
            <person name="Davison A.J."/>
            <person name="Dolan A."/>
            <person name="Akter P."/>
            <person name="Addison C."/>
            <person name="Dargan D.J."/>
            <person name="Alcendor D.J."/>
            <person name="McGeoch D.J."/>
            <person name="Hayward G.S."/>
        </authorList>
    </citation>
    <scope>ERRATUM OF PUBMED:12533697</scope>
</reference>
<reference key="5">
    <citation type="journal article" date="2004" name="J. Virol.">
        <title>Identification of proteins in human cytomegalovirus (HCMV) particles: the HCMV proteome.</title>
        <authorList>
            <person name="Varnum S.M."/>
            <person name="Streblow D.N."/>
            <person name="Monroe M.E."/>
            <person name="Smith P."/>
            <person name="Auberry K.J."/>
            <person name="Pasa-Tolic L."/>
            <person name="Wang D."/>
            <person name="Camp D.G. II"/>
            <person name="Rodland K."/>
            <person name="Wiley S."/>
            <person name="Britt W."/>
            <person name="Shenk T."/>
            <person name="Smith R.D."/>
            <person name="Nelson J.A."/>
        </authorList>
    </citation>
    <scope>IDENTIFICATION</scope>
</reference>
<reference key="6">
    <citation type="journal article" date="2004" name="J. Virol.">
        <authorList>
            <person name="Varnum S.M."/>
            <person name="Streblow D.N."/>
            <person name="Monroe M.E."/>
            <person name="Smith P."/>
            <person name="Auberry K.J."/>
            <person name="Pasa-Tolic L."/>
            <person name="Wang D."/>
            <person name="Camp D.G. II"/>
            <person name="Rodland K."/>
            <person name="Wiley S."/>
            <person name="Britt W."/>
            <person name="Shenk T."/>
            <person name="Smith R.D."/>
            <person name="Nelson J.A."/>
        </authorList>
    </citation>
    <scope>ERRATUM OF PUBMED:15452216</scope>
</reference>
<name>US23_HCMVA</name>
<keyword id="KW-1185">Reference proteome</keyword>
<keyword id="KW-0946">Virion</keyword>
<keyword id="KW-0920">Virion tegument</keyword>
<comment type="subcellular location">
    <subcellularLocation>
        <location evidence="2">Virion tegument</location>
    </subcellularLocation>
</comment>
<comment type="similarity">
    <text evidence="2">Belongs to the herpesviridae US22 family.</text>
</comment>
<dbReference type="EMBL" id="X17403">
    <property type="protein sequence ID" value="CAA35290.1"/>
    <property type="molecule type" value="Genomic_DNA"/>
</dbReference>
<dbReference type="EMBL" id="X04650">
    <property type="protein sequence ID" value="CAB37115.1"/>
    <property type="molecule type" value="Genomic_DNA"/>
</dbReference>
<dbReference type="EMBL" id="BK000394">
    <property type="protein sequence ID" value="DAA00211.1"/>
    <property type="molecule type" value="Genomic_DNA"/>
</dbReference>
<dbReference type="PIR" id="G27231">
    <property type="entry name" value="QQBEG7"/>
</dbReference>
<dbReference type="Proteomes" id="UP000008991">
    <property type="component" value="Segment"/>
</dbReference>
<dbReference type="Proteomes" id="UP000008992">
    <property type="component" value="Segment"/>
</dbReference>
<dbReference type="GO" id="GO:0019033">
    <property type="term" value="C:viral tegument"/>
    <property type="evidence" value="ECO:0007669"/>
    <property type="project" value="UniProtKB-SubCell"/>
</dbReference>
<dbReference type="InterPro" id="IPR003360">
    <property type="entry name" value="US22-like"/>
</dbReference>
<dbReference type="Pfam" id="PF02393">
    <property type="entry name" value="US22"/>
    <property type="match status" value="2"/>
</dbReference>
<organismHost>
    <name type="scientific">Homo sapiens</name>
    <name type="common">Human</name>
    <dbReference type="NCBI Taxonomy" id="9606"/>
</organismHost>
<organism>
    <name type="scientific">Human cytomegalovirus (strain AD169)</name>
    <name type="common">HHV-5</name>
    <name type="synonym">Human herpesvirus 5</name>
    <dbReference type="NCBI Taxonomy" id="10360"/>
    <lineage>
        <taxon>Viruses</taxon>
        <taxon>Duplodnaviria</taxon>
        <taxon>Heunggongvirae</taxon>
        <taxon>Peploviricota</taxon>
        <taxon>Herviviricetes</taxon>
        <taxon>Herpesvirales</taxon>
        <taxon>Orthoherpesviridae</taxon>
        <taxon>Betaherpesvirinae</taxon>
        <taxon>Cytomegalovirus</taxon>
        <taxon>Cytomegalovirus humanbeta5</taxon>
        <taxon>Human cytomegalovirus</taxon>
    </lineage>
</organism>
<feature type="chain" id="PRO_0000115285" description="Tegument protein US23">
    <location>
        <begin position="1"/>
        <end position="592"/>
    </location>
</feature>
<feature type="region of interest" description="Disordered" evidence="1">
    <location>
        <begin position="407"/>
        <end position="491"/>
    </location>
</feature>
<feature type="compositionally biased region" description="Acidic residues" evidence="1">
    <location>
        <begin position="460"/>
        <end position="481"/>
    </location>
</feature>
<proteinExistence type="inferred from homology"/>